<dbReference type="EC" id="6.3.5.-" evidence="1"/>
<dbReference type="EMBL" id="GG657460">
    <property type="protein sequence ID" value="OAT10455.1"/>
    <property type="status" value="ALT_INIT"/>
    <property type="molecule type" value="Genomic_DNA"/>
</dbReference>
<dbReference type="RefSeq" id="XP_002623446.1">
    <property type="nucleotide sequence ID" value="XM_002623400.1"/>
</dbReference>
<dbReference type="SMR" id="C5JUE6"/>
<dbReference type="STRING" id="559298.C5JUE6"/>
<dbReference type="GeneID" id="8503441"/>
<dbReference type="KEGG" id="bgh:BDBG_06294"/>
<dbReference type="HOGENOM" id="CLU_019240_4_1_1"/>
<dbReference type="OrthoDB" id="1722066at2759"/>
<dbReference type="Proteomes" id="UP000002038">
    <property type="component" value="Unassembled WGS sequence"/>
</dbReference>
<dbReference type="GO" id="GO:0030956">
    <property type="term" value="C:glutamyl-tRNA(Gln) amidotransferase complex"/>
    <property type="evidence" value="ECO:0007669"/>
    <property type="project" value="UniProtKB-UniRule"/>
</dbReference>
<dbReference type="GO" id="GO:0005739">
    <property type="term" value="C:mitochondrion"/>
    <property type="evidence" value="ECO:0007669"/>
    <property type="project" value="UniProtKB-SubCell"/>
</dbReference>
<dbReference type="GO" id="GO:0005524">
    <property type="term" value="F:ATP binding"/>
    <property type="evidence" value="ECO:0007669"/>
    <property type="project" value="UniProtKB-KW"/>
</dbReference>
<dbReference type="GO" id="GO:0050567">
    <property type="term" value="F:glutaminyl-tRNA synthase (glutamine-hydrolyzing) activity"/>
    <property type="evidence" value="ECO:0007669"/>
    <property type="project" value="UniProtKB-UniRule"/>
</dbReference>
<dbReference type="GO" id="GO:0070681">
    <property type="term" value="P:glutaminyl-tRNAGln biosynthesis via transamidation"/>
    <property type="evidence" value="ECO:0007669"/>
    <property type="project" value="UniProtKB-UniRule"/>
</dbReference>
<dbReference type="GO" id="GO:0032543">
    <property type="term" value="P:mitochondrial translation"/>
    <property type="evidence" value="ECO:0007669"/>
    <property type="project" value="UniProtKB-UniRule"/>
</dbReference>
<dbReference type="Gene3D" id="1.10.10.410">
    <property type="match status" value="1"/>
</dbReference>
<dbReference type="HAMAP" id="MF_00121">
    <property type="entry name" value="GatB"/>
    <property type="match status" value="1"/>
</dbReference>
<dbReference type="InterPro" id="IPR017959">
    <property type="entry name" value="Asn/Gln-tRNA_amidoTrfase_suB/E"/>
</dbReference>
<dbReference type="InterPro" id="IPR006075">
    <property type="entry name" value="Asn/Gln-tRNA_Trfase_suB/E_cat"/>
</dbReference>
<dbReference type="InterPro" id="IPR018027">
    <property type="entry name" value="Asn/Gln_amidotransferase"/>
</dbReference>
<dbReference type="InterPro" id="IPR003789">
    <property type="entry name" value="Asn/Gln_tRNA_amidoTrase-B-like"/>
</dbReference>
<dbReference type="InterPro" id="IPR004413">
    <property type="entry name" value="GatB"/>
</dbReference>
<dbReference type="InterPro" id="IPR023168">
    <property type="entry name" value="GatB_Yqey_C_2"/>
</dbReference>
<dbReference type="InterPro" id="IPR017958">
    <property type="entry name" value="Gln-tRNA_amidoTrfase_suB_CS"/>
</dbReference>
<dbReference type="InterPro" id="IPR014746">
    <property type="entry name" value="Gln_synth/guanido_kin_cat_dom"/>
</dbReference>
<dbReference type="NCBIfam" id="TIGR00133">
    <property type="entry name" value="gatB"/>
    <property type="match status" value="1"/>
</dbReference>
<dbReference type="NCBIfam" id="NF004012">
    <property type="entry name" value="PRK05477.1-2"/>
    <property type="match status" value="1"/>
</dbReference>
<dbReference type="PANTHER" id="PTHR11659">
    <property type="entry name" value="GLUTAMYL-TRNA GLN AMIDOTRANSFERASE SUBUNIT B MITOCHONDRIAL AND PROKARYOTIC PET112-RELATED"/>
    <property type="match status" value="1"/>
</dbReference>
<dbReference type="PANTHER" id="PTHR11659:SF0">
    <property type="entry name" value="GLUTAMYL-TRNA(GLN) AMIDOTRANSFERASE SUBUNIT B, MITOCHONDRIAL"/>
    <property type="match status" value="1"/>
</dbReference>
<dbReference type="Pfam" id="PF02934">
    <property type="entry name" value="GatB_N"/>
    <property type="match status" value="1"/>
</dbReference>
<dbReference type="Pfam" id="PF02637">
    <property type="entry name" value="GatB_Yqey"/>
    <property type="match status" value="1"/>
</dbReference>
<dbReference type="SMART" id="SM00845">
    <property type="entry name" value="GatB_Yqey"/>
    <property type="match status" value="1"/>
</dbReference>
<dbReference type="SUPFAM" id="SSF89095">
    <property type="entry name" value="GatB/YqeY motif"/>
    <property type="match status" value="1"/>
</dbReference>
<dbReference type="SUPFAM" id="SSF55931">
    <property type="entry name" value="Glutamine synthetase/guanido kinase"/>
    <property type="match status" value="1"/>
</dbReference>
<dbReference type="PROSITE" id="PS01234">
    <property type="entry name" value="GATB"/>
    <property type="match status" value="1"/>
</dbReference>
<comment type="function">
    <text evidence="1">Allows the formation of correctly charged Gln-tRNA(Gln) through the transamidation of misacylated Glu-tRNA(Gln) in the mitochondria. The reaction takes place in the presence of glutamine and ATP through an activated gamma-phospho-Glu-tRNA(Gln).</text>
</comment>
<comment type="catalytic activity">
    <reaction evidence="1">
        <text>L-glutamyl-tRNA(Gln) + L-glutamine + ATP + H2O = L-glutaminyl-tRNA(Gln) + L-glutamate + ADP + phosphate + H(+)</text>
        <dbReference type="Rhea" id="RHEA:17521"/>
        <dbReference type="Rhea" id="RHEA-COMP:9681"/>
        <dbReference type="Rhea" id="RHEA-COMP:9684"/>
        <dbReference type="ChEBI" id="CHEBI:15377"/>
        <dbReference type="ChEBI" id="CHEBI:15378"/>
        <dbReference type="ChEBI" id="CHEBI:29985"/>
        <dbReference type="ChEBI" id="CHEBI:30616"/>
        <dbReference type="ChEBI" id="CHEBI:43474"/>
        <dbReference type="ChEBI" id="CHEBI:58359"/>
        <dbReference type="ChEBI" id="CHEBI:78520"/>
        <dbReference type="ChEBI" id="CHEBI:78521"/>
        <dbReference type="ChEBI" id="CHEBI:456216"/>
    </reaction>
</comment>
<comment type="subunit">
    <text evidence="1">Subunit of the heterotrimeric GatCAB amidotransferase (AdT) complex, composed of A, B and C subunits.</text>
</comment>
<comment type="subcellular location">
    <subcellularLocation>
        <location evidence="1">Mitochondrion</location>
    </subcellularLocation>
</comment>
<comment type="similarity">
    <text evidence="1">Belongs to the GatB/GatE family. GatB subfamily.</text>
</comment>
<comment type="sequence caution" evidence="3">
    <conflict type="erroneous initiation">
        <sequence resource="EMBL-CDS" id="OAT10455"/>
    </conflict>
    <text>Extended N-terminus.</text>
</comment>
<gene>
    <name type="ORF">BDBG_06294</name>
</gene>
<protein>
    <recommendedName>
        <fullName evidence="1">Glutamyl-tRNA(Gln) amidotransferase subunit B, mitochondrial</fullName>
        <shortName evidence="1">Glu-AdT subunit B</shortName>
        <ecNumber evidence="1">6.3.5.-</ecNumber>
    </recommendedName>
</protein>
<name>GATB_BLAGS</name>
<reference key="1">
    <citation type="journal article" date="2015" name="PLoS Genet.">
        <title>The dynamic genome and transcriptome of the human fungal pathogen Blastomyces and close relative Emmonsia.</title>
        <authorList>
            <person name="Munoz J.F."/>
            <person name="Gauthier G.M."/>
            <person name="Desjardins C.A."/>
            <person name="Gallo J.E."/>
            <person name="Holder J."/>
            <person name="Sullivan T.D."/>
            <person name="Marty A.J."/>
            <person name="Carmen J.C."/>
            <person name="Chen Z."/>
            <person name="Ding L."/>
            <person name="Gujja S."/>
            <person name="Magrini V."/>
            <person name="Misas E."/>
            <person name="Mitreva M."/>
            <person name="Priest M."/>
            <person name="Saif S."/>
            <person name="Whiston E.A."/>
            <person name="Young S."/>
            <person name="Zeng Q."/>
            <person name="Goldman W.E."/>
            <person name="Mardis E.R."/>
            <person name="Taylor J.W."/>
            <person name="McEwen J.G."/>
            <person name="Clay O.K."/>
            <person name="Klein B.S."/>
            <person name="Cuomo C.A."/>
        </authorList>
    </citation>
    <scope>NUCLEOTIDE SEQUENCE [LARGE SCALE GENOMIC DNA]</scope>
    <source>
        <strain>SLH14081</strain>
    </source>
</reference>
<keyword id="KW-0067">ATP-binding</keyword>
<keyword id="KW-0436">Ligase</keyword>
<keyword id="KW-0496">Mitochondrion</keyword>
<keyword id="KW-0547">Nucleotide-binding</keyword>
<keyword id="KW-0648">Protein biosynthesis</keyword>
<keyword id="KW-1185">Reference proteome</keyword>
<keyword id="KW-0809">Transit peptide</keyword>
<feature type="transit peptide" description="Mitochondrion" evidence="1">
    <location>
        <begin position="1"/>
        <end position="48"/>
    </location>
</feature>
<feature type="chain" id="PRO_0000413241" description="Glutamyl-tRNA(Gln) amidotransferase subunit B, mitochondrial">
    <location>
        <begin position="49"/>
        <end position="604"/>
    </location>
</feature>
<feature type="region of interest" description="Disordered" evidence="2">
    <location>
        <begin position="28"/>
        <end position="57"/>
    </location>
</feature>
<feature type="compositionally biased region" description="Polar residues" evidence="2">
    <location>
        <begin position="33"/>
        <end position="46"/>
    </location>
</feature>
<evidence type="ECO:0000255" key="1">
    <source>
        <dbReference type="HAMAP-Rule" id="MF_03147"/>
    </source>
</evidence>
<evidence type="ECO:0000256" key="2">
    <source>
        <dbReference type="SAM" id="MobiDB-lite"/>
    </source>
</evidence>
<evidence type="ECO:0000305" key="3"/>
<proteinExistence type="inferred from homology"/>
<organism>
    <name type="scientific">Blastomyces gilchristii (strain SLH14081)</name>
    <name type="common">Blastomyces dermatitidis</name>
    <dbReference type="NCBI Taxonomy" id="559298"/>
    <lineage>
        <taxon>Eukaryota</taxon>
        <taxon>Fungi</taxon>
        <taxon>Dikarya</taxon>
        <taxon>Ascomycota</taxon>
        <taxon>Pezizomycotina</taxon>
        <taxon>Eurotiomycetes</taxon>
        <taxon>Eurotiomycetidae</taxon>
        <taxon>Onygenales</taxon>
        <taxon>Ajellomycetaceae</taxon>
        <taxon>Blastomyces</taxon>
    </lineage>
</organism>
<accession>C5JUE6</accession>
<accession>A0A179UQT6</accession>
<sequence length="604" mass="67298">MIRQCLSRRGAYSRYRLAARGVELAEPFHHQSSRPQGRRNWSSSPRCSLDIRTDTPRSRSEYVPLRKQLKEEAKAKRAAKRKGSAPPAKHDDWELTVGIEIHAQLDTDAKLFSRASAAIDDIPNSNVALFDIALPGSQPLFQPSTLIPALRAALAMNCDIQRVSRFDRKHYFYQDQPAGYQITQYYEPYAKNGSIWLQEHDGIAREDGEGVQIGIKQIQMEQDTAKSQELPSSTYLLDFNRVSRPLIEIITLPQIHSPATAAACVRKIQAILQSVGAVTTGMEMGGLRADVNVSVRKRSEGAGDHEYHGIVGLGQRTEIKNLSSFKAVEDAIIAERDRQIAVLEAGGTIEGETRGWTLGSTETRKLRGKEGEVDYRYMPDPDLGPVVIGEDVICDLQMKMPLLPDALFQMLVRNPKYKLSTADAKTMIELDDGQRLEYYQDVVDILIGLQTDLSADFSGGKAVGNWVLHELGGLLTKSSLPWDSGRVPAQSLAEIIDLLSRKEITSSSAKSLLAMVFDGDKRSVAQIVEDENLRFQSLSRGEYIALAEEVMRQNPKMVSEIREKGQLGKIGWFVGQIKRIGDANRVEAQKAEEILRELILKKNS</sequence>